<reference key="1">
    <citation type="journal article" date="2004" name="Nature">
        <title>Genome sequence of the Brown Norway rat yields insights into mammalian evolution.</title>
        <authorList>
            <person name="Gibbs R.A."/>
            <person name="Weinstock G.M."/>
            <person name="Metzker M.L."/>
            <person name="Muzny D.M."/>
            <person name="Sodergren E.J."/>
            <person name="Scherer S."/>
            <person name="Scott G."/>
            <person name="Steffen D."/>
            <person name="Worley K.C."/>
            <person name="Burch P.E."/>
            <person name="Okwuonu G."/>
            <person name="Hines S."/>
            <person name="Lewis L."/>
            <person name="Deramo C."/>
            <person name="Delgado O."/>
            <person name="Dugan-Rocha S."/>
            <person name="Miner G."/>
            <person name="Morgan M."/>
            <person name="Hawes A."/>
            <person name="Gill R."/>
            <person name="Holt R.A."/>
            <person name="Adams M.D."/>
            <person name="Amanatides P.G."/>
            <person name="Baden-Tillson H."/>
            <person name="Barnstead M."/>
            <person name="Chin S."/>
            <person name="Evans C.A."/>
            <person name="Ferriera S."/>
            <person name="Fosler C."/>
            <person name="Glodek A."/>
            <person name="Gu Z."/>
            <person name="Jennings D."/>
            <person name="Kraft C.L."/>
            <person name="Nguyen T."/>
            <person name="Pfannkoch C.M."/>
            <person name="Sitter C."/>
            <person name="Sutton G.G."/>
            <person name="Venter J.C."/>
            <person name="Woodage T."/>
            <person name="Smith D."/>
            <person name="Lee H.-M."/>
            <person name="Gustafson E."/>
            <person name="Cahill P."/>
            <person name="Kana A."/>
            <person name="Doucette-Stamm L."/>
            <person name="Weinstock K."/>
            <person name="Fechtel K."/>
            <person name="Weiss R.B."/>
            <person name="Dunn D.M."/>
            <person name="Green E.D."/>
            <person name="Blakesley R.W."/>
            <person name="Bouffard G.G."/>
            <person name="De Jong P.J."/>
            <person name="Osoegawa K."/>
            <person name="Zhu B."/>
            <person name="Marra M."/>
            <person name="Schein J."/>
            <person name="Bosdet I."/>
            <person name="Fjell C."/>
            <person name="Jones S."/>
            <person name="Krzywinski M."/>
            <person name="Mathewson C."/>
            <person name="Siddiqui A."/>
            <person name="Wye N."/>
            <person name="McPherson J."/>
            <person name="Zhao S."/>
            <person name="Fraser C.M."/>
            <person name="Shetty J."/>
            <person name="Shatsman S."/>
            <person name="Geer K."/>
            <person name="Chen Y."/>
            <person name="Abramzon S."/>
            <person name="Nierman W.C."/>
            <person name="Havlak P.H."/>
            <person name="Chen R."/>
            <person name="Durbin K.J."/>
            <person name="Egan A."/>
            <person name="Ren Y."/>
            <person name="Song X.-Z."/>
            <person name="Li B."/>
            <person name="Liu Y."/>
            <person name="Qin X."/>
            <person name="Cawley S."/>
            <person name="Cooney A.J."/>
            <person name="D'Souza L.M."/>
            <person name="Martin K."/>
            <person name="Wu J.Q."/>
            <person name="Gonzalez-Garay M.L."/>
            <person name="Jackson A.R."/>
            <person name="Kalafus K.J."/>
            <person name="McLeod M.P."/>
            <person name="Milosavljevic A."/>
            <person name="Virk D."/>
            <person name="Volkov A."/>
            <person name="Wheeler D.A."/>
            <person name="Zhang Z."/>
            <person name="Bailey J.A."/>
            <person name="Eichler E.E."/>
            <person name="Tuzun E."/>
            <person name="Birney E."/>
            <person name="Mongin E."/>
            <person name="Ureta-Vidal A."/>
            <person name="Woodwark C."/>
            <person name="Zdobnov E."/>
            <person name="Bork P."/>
            <person name="Suyama M."/>
            <person name="Torrents D."/>
            <person name="Alexandersson M."/>
            <person name="Trask B.J."/>
            <person name="Young J.M."/>
            <person name="Huang H."/>
            <person name="Wang H."/>
            <person name="Xing H."/>
            <person name="Daniels S."/>
            <person name="Gietzen D."/>
            <person name="Schmidt J."/>
            <person name="Stevens K."/>
            <person name="Vitt U."/>
            <person name="Wingrove J."/>
            <person name="Camara F."/>
            <person name="Mar Alba M."/>
            <person name="Abril J.F."/>
            <person name="Guigo R."/>
            <person name="Smit A."/>
            <person name="Dubchak I."/>
            <person name="Rubin E.M."/>
            <person name="Couronne O."/>
            <person name="Poliakov A."/>
            <person name="Huebner N."/>
            <person name="Ganten D."/>
            <person name="Goesele C."/>
            <person name="Hummel O."/>
            <person name="Kreitler T."/>
            <person name="Lee Y.-A."/>
            <person name="Monti J."/>
            <person name="Schulz H."/>
            <person name="Zimdahl H."/>
            <person name="Himmelbauer H."/>
            <person name="Lehrach H."/>
            <person name="Jacob H.J."/>
            <person name="Bromberg S."/>
            <person name="Gullings-Handley J."/>
            <person name="Jensen-Seaman M.I."/>
            <person name="Kwitek A.E."/>
            <person name="Lazar J."/>
            <person name="Pasko D."/>
            <person name="Tonellato P.J."/>
            <person name="Twigger S."/>
            <person name="Ponting C.P."/>
            <person name="Duarte J.M."/>
            <person name="Rice S."/>
            <person name="Goodstadt L."/>
            <person name="Beatson S.A."/>
            <person name="Emes R.D."/>
            <person name="Winter E.E."/>
            <person name="Webber C."/>
            <person name="Brandt P."/>
            <person name="Nyakatura G."/>
            <person name="Adetobi M."/>
            <person name="Chiaromonte F."/>
            <person name="Elnitski L."/>
            <person name="Eswara P."/>
            <person name="Hardison R.C."/>
            <person name="Hou M."/>
            <person name="Kolbe D."/>
            <person name="Makova K."/>
            <person name="Miller W."/>
            <person name="Nekrutenko A."/>
            <person name="Riemer C."/>
            <person name="Schwartz S."/>
            <person name="Taylor J."/>
            <person name="Yang S."/>
            <person name="Zhang Y."/>
            <person name="Lindpaintner K."/>
            <person name="Andrews T.D."/>
            <person name="Caccamo M."/>
            <person name="Clamp M."/>
            <person name="Clarke L."/>
            <person name="Curwen V."/>
            <person name="Durbin R.M."/>
            <person name="Eyras E."/>
            <person name="Searle S.M."/>
            <person name="Cooper G.M."/>
            <person name="Batzoglou S."/>
            <person name="Brudno M."/>
            <person name="Sidow A."/>
            <person name="Stone E.A."/>
            <person name="Payseur B.A."/>
            <person name="Bourque G."/>
            <person name="Lopez-Otin C."/>
            <person name="Puente X.S."/>
            <person name="Chakrabarti K."/>
            <person name="Chatterji S."/>
            <person name="Dewey C."/>
            <person name="Pachter L."/>
            <person name="Bray N."/>
            <person name="Yap V.B."/>
            <person name="Caspi A."/>
            <person name="Tesler G."/>
            <person name="Pevzner P.A."/>
            <person name="Haussler D."/>
            <person name="Roskin K.M."/>
            <person name="Baertsch R."/>
            <person name="Clawson H."/>
            <person name="Furey T.S."/>
            <person name="Hinrichs A.S."/>
            <person name="Karolchik D."/>
            <person name="Kent W.J."/>
            <person name="Rosenbloom K.R."/>
            <person name="Trumbower H."/>
            <person name="Weirauch M."/>
            <person name="Cooper D.N."/>
            <person name="Stenson P.D."/>
            <person name="Ma B."/>
            <person name="Brent M."/>
            <person name="Arumugam M."/>
            <person name="Shteynberg D."/>
            <person name="Copley R.R."/>
            <person name="Taylor M.S."/>
            <person name="Riethman H."/>
            <person name="Mudunuri U."/>
            <person name="Peterson J."/>
            <person name="Guyer M."/>
            <person name="Felsenfeld A."/>
            <person name="Old S."/>
            <person name="Mockrin S."/>
            <person name="Collins F.S."/>
        </authorList>
    </citation>
    <scope>NUCLEOTIDE SEQUENCE [LARGE SCALE GENOMIC DNA]</scope>
    <source>
        <strain>Brown Norway</strain>
    </source>
</reference>
<reference key="2">
    <citation type="submission" date="2005-07" db="EMBL/GenBank/DDBJ databases">
        <authorList>
            <person name="Mural R.J."/>
            <person name="Adams M.D."/>
            <person name="Myers E.W."/>
            <person name="Smith H.O."/>
            <person name="Venter J.C."/>
        </authorList>
    </citation>
    <scope>NUCLEOTIDE SEQUENCE [LARGE SCALE GENOMIC DNA]</scope>
    <source>
        <strain>Brown Norway</strain>
    </source>
</reference>
<reference key="3">
    <citation type="journal article" date="2004" name="Genome Res.">
        <title>The status, quality, and expansion of the NIH full-length cDNA project: the Mammalian Gene Collection (MGC).</title>
        <authorList>
            <consortium name="The MGC Project Team"/>
        </authorList>
    </citation>
    <scope>NUCLEOTIDE SEQUENCE [LARGE SCALE MRNA]</scope>
    <source>
        <tissue>Placenta</tissue>
    </source>
</reference>
<accession>G3V8T1</accession>
<accession>Q4KLM1</accession>
<keyword id="KW-0040">ANK repeat</keyword>
<keyword id="KW-0158">Chromosome</keyword>
<keyword id="KW-0539">Nucleus</keyword>
<keyword id="KW-0597">Phosphoprotein</keyword>
<keyword id="KW-1185">Reference proteome</keyword>
<keyword id="KW-0677">Repeat</keyword>
<keyword id="KW-0804">Transcription</keyword>
<keyword id="KW-0805">Transcription regulation</keyword>
<comment type="function">
    <text evidence="2">Heterochromatin component that specifically recognizes and binds methylated 'Lys-9' of histone H3 (H3K9me) and promotes recruitment of proteins that mediate epigenetic repression. Mediates recruitment of the HUSH complex to H3K9me3 sites: the HUSH complex is recruited to genomic loci rich in H3K9me3 and is required to maintain transcriptional silencing by promoting recruitment of SETDB1, a histone methyltransferase that mediates further deposition of H3K9me3, as well as MORC2. Binds H3K9me and promotes DNA methylation by recruiting DNMT3A to target CpG sites; these can be situated within the coding region of the gene. Mediates down-regulation of CDH1 expression. Also represses L1 retrotransposons in collaboration with MORC2 and, probably, SETDB1, the silencing is dependent of repressive epigenetic modifications, such as H3K9me3 mark. Silencing events often occur within introns of transcriptionally active genes, and lead to the down-regulation of host gene expression. The HUSH complex is also involved in the silencing of unintegrated retroviral DNA by being recruited by ZNF638: some part of the retroviral DNA formed immediately after infection remains unintegrated in the host genome and is transcriptionally repressed.</text>
</comment>
<comment type="subunit">
    <text evidence="1 2">Homodimer. Interacts (via chromo domain) with histone H3K9me3. Has the highest affinity for H3K9me3, and lesser affinity for H3K9me2 and H3K9me1. Component of the HUSH complex; at least composed of TASOR, PPHLN1 and MPHOSPH8. Interacts with DNMT3, EHMT1 and SETDB1. Interacts with MORC2; the interaction associateS MORC2 with the HUSH complex which recruits MORC2 to heterochromatic loci. Interacts with ZNF638; leading to recruitment of the HUSH complex to unintegrated retroviral DNA (By similarity). Interacts with TASOR (By similarity).</text>
</comment>
<comment type="subcellular location">
    <subcellularLocation>
        <location evidence="2">Nucleus</location>
    </subcellularLocation>
    <subcellularLocation>
        <location evidence="2">Chromosome</location>
    </subcellularLocation>
    <text evidence="2">Detected on heterochromatin. Dissociates from chromatin during interphase and early mitosis. Detected on nucleosomes.</text>
</comment>
<comment type="domain">
    <text evidence="2">The chromo domain mediates interaction with methylated 'Lys-9' of histone H3 (H3K9me), with the highest affinity for the trimethylated form (H3K9me3).</text>
</comment>
<comment type="PTM">
    <text evidence="2">Phosphorylated in M (mitotic) phase. Phosphorylation by CDK1 promotes dissociation from chromatin.</text>
</comment>
<comment type="sequence caution" evidence="5">
    <conflict type="erroneous initiation">
        <sequence resource="EMBL-CDS" id="AAH99116"/>
    </conflict>
    <text>Truncated N-terminus.</text>
</comment>
<sequence>MAAATEENMSVAALVMSVPDNIGRSPEVEGGGAAGEEKDAATKGTVAVGDSEEDGEDVFEVERILDMKCEGGKNLYKVRWKGYTSDDDTWEPEVHLEDCKEVLLEFRKKVAENKAKAVRKDIQKLSLNNDIFEADSDIDQQGDTKEDTSPRKKKKKIKYKEDKSPDDLRKKRAKMGKLKDKFKTELESTSEILGFDVKTKKRILEVKEELKDSKKPKKDEIKETKKTKRADIRDLKIKIREDVKDNRKTKKERYIDSPLESESPNDSFTLEDESEDFLSDNKEKQNVRTAKDKTGQDTVQESIFEKHLDDLISIEEAGTRVRRKKKQPRKFEEPKEIKKLENTNNFLERKMIPKKQRNQDKGRSNPELSKLPSPVFAQTMKSLRLSGEEKGLKSSDLAEEEKERKNEPKEKYQKRYDFDKEEKARKEPKGLKSFKEIRNAFDLFKKTAEEKNDLENNSKREEISLDYKITHDNKTKDKCSLREERNTRDETDTWAYIAAEGDQEVSDSVCQTDESSDGKQPILSLGMDLQLEWMKLEDFQKHLDGEDEPFITANRIPSNLLRDAVKNGDYIAVKVALNSNEEYNLDQEDSTGMTLVMLAAAGGQDDLLRLLITKGAKVNGRQKNGTTALIHAAEKNFLTTVAILLEAGAFVNVQQSNGETALMKACKRGNSDIVRLVIECGADCNILSKHQNSALYFAKQCNNVLVYELLKSHLETLSRVAEETIRDYFESRLALLEPVFPIACHRLCEGPDFSTDFNYMPPQNMPEGSGVLLFIFHANFLGKDVIARLCGPCSVQAVVLNDKFQLPVFLDSHFVYSFSPVAGPNKLFIRLTEAPFAKVKLLIGAYRVQLQ</sequence>
<feature type="chain" id="PRO_0000415977" description="M-phase phosphoprotein 8">
    <location>
        <begin position="1"/>
        <end position="851"/>
    </location>
</feature>
<feature type="domain" description="Chromo" evidence="3">
    <location>
        <begin position="59"/>
        <end position="118"/>
    </location>
</feature>
<feature type="repeat" description="ANK 1">
    <location>
        <begin position="591"/>
        <end position="620"/>
    </location>
</feature>
<feature type="repeat" description="ANK 2">
    <location>
        <begin position="624"/>
        <end position="653"/>
    </location>
</feature>
<feature type="repeat" description="ANK 3">
    <location>
        <begin position="657"/>
        <end position="686"/>
    </location>
</feature>
<feature type="repeat" description="ANK 4">
    <location>
        <begin position="690"/>
        <end position="719"/>
    </location>
</feature>
<feature type="region of interest" description="Disordered" evidence="4">
    <location>
        <begin position="21"/>
        <end position="54"/>
    </location>
</feature>
<feature type="region of interest" description="Histone H3K9me3 binding" evidence="2">
    <location>
        <begin position="80"/>
        <end position="87"/>
    </location>
</feature>
<feature type="region of interest" description="Disordered" evidence="4">
    <location>
        <begin position="133"/>
        <end position="174"/>
    </location>
</feature>
<feature type="region of interest" description="Disordered" evidence="4">
    <location>
        <begin position="240"/>
        <end position="302"/>
    </location>
</feature>
<feature type="region of interest" description="Disordered" evidence="4">
    <location>
        <begin position="315"/>
        <end position="428"/>
    </location>
</feature>
<feature type="compositionally biased region" description="Basic and acidic residues" evidence="4">
    <location>
        <begin position="159"/>
        <end position="169"/>
    </location>
</feature>
<feature type="compositionally biased region" description="Acidic residues" evidence="4">
    <location>
        <begin position="269"/>
        <end position="278"/>
    </location>
</feature>
<feature type="compositionally biased region" description="Basic and acidic residues" evidence="4">
    <location>
        <begin position="279"/>
        <end position="295"/>
    </location>
</feature>
<feature type="compositionally biased region" description="Basic and acidic residues" evidence="4">
    <location>
        <begin position="329"/>
        <end position="364"/>
    </location>
</feature>
<feature type="compositionally biased region" description="Basic and acidic residues" evidence="4">
    <location>
        <begin position="401"/>
        <end position="428"/>
    </location>
</feature>
<feature type="site" description="Interaction with histone H3K9me3" evidence="2">
    <location>
        <position position="59"/>
    </location>
</feature>
<feature type="modified residue" description="Phosphoserine" evidence="2">
    <location>
        <position position="51"/>
    </location>
</feature>
<feature type="modified residue" description="Phosphoserine" evidence="1">
    <location>
        <position position="85"/>
    </location>
</feature>
<feature type="modified residue" description="Phosphoserine" evidence="2">
    <location>
        <position position="136"/>
    </location>
</feature>
<feature type="modified residue" description="Phosphothreonine" evidence="1">
    <location>
        <position position="144"/>
    </location>
</feature>
<feature type="modified residue" description="Phosphoserine; by CDK1" evidence="2">
    <location>
        <position position="149"/>
    </location>
</feature>
<feature type="modified residue" description="Phosphoserine; by CDK1" evidence="2">
    <location>
        <position position="164"/>
    </location>
</feature>
<feature type="modified residue" description="Phosphoserine" evidence="2">
    <location>
        <position position="188"/>
    </location>
</feature>
<feature type="modified residue" description="Phosphoserine" evidence="1">
    <location>
        <position position="263"/>
    </location>
</feature>
<feature type="modified residue" description="Phosphoserine" evidence="2">
    <location>
        <position position="267"/>
    </location>
</feature>
<feature type="modified residue" description="Phosphoserine" evidence="2">
    <location>
        <position position="274"/>
    </location>
</feature>
<feature type="modified residue" description="Phosphoserine" evidence="2">
    <location>
        <position position="313"/>
    </location>
</feature>
<feature type="modified residue" description="Phosphothreonine; by CDK1" evidence="2">
    <location>
        <position position="379"/>
    </location>
</feature>
<feature type="modified residue" description="Phosphoserine" evidence="2">
    <location>
        <position position="386"/>
    </location>
</feature>
<feature type="modified residue" description="Phosphoserine" evidence="2">
    <location>
        <position position="394"/>
    </location>
</feature>
<feature type="modified residue" description="Phosphothreonine" evidence="2">
    <location>
        <position position="447"/>
    </location>
</feature>
<name>MPP8_RAT</name>
<evidence type="ECO:0000250" key="1">
    <source>
        <dbReference type="UniProtKB" id="Q3TYA6"/>
    </source>
</evidence>
<evidence type="ECO:0000250" key="2">
    <source>
        <dbReference type="UniProtKB" id="Q99549"/>
    </source>
</evidence>
<evidence type="ECO:0000255" key="3">
    <source>
        <dbReference type="PROSITE-ProRule" id="PRU00053"/>
    </source>
</evidence>
<evidence type="ECO:0000256" key="4">
    <source>
        <dbReference type="SAM" id="MobiDB-lite"/>
    </source>
</evidence>
<evidence type="ECO:0000305" key="5"/>
<evidence type="ECO:0000312" key="6">
    <source>
        <dbReference type="RGD" id="1305133"/>
    </source>
</evidence>
<gene>
    <name evidence="6" type="primary">Mphosph8</name>
    <name evidence="2" type="synonym">Mpp8</name>
</gene>
<organism>
    <name type="scientific">Rattus norvegicus</name>
    <name type="common">Rat</name>
    <dbReference type="NCBI Taxonomy" id="10116"/>
    <lineage>
        <taxon>Eukaryota</taxon>
        <taxon>Metazoa</taxon>
        <taxon>Chordata</taxon>
        <taxon>Craniata</taxon>
        <taxon>Vertebrata</taxon>
        <taxon>Euteleostomi</taxon>
        <taxon>Mammalia</taxon>
        <taxon>Eutheria</taxon>
        <taxon>Euarchontoglires</taxon>
        <taxon>Glires</taxon>
        <taxon>Rodentia</taxon>
        <taxon>Myomorpha</taxon>
        <taxon>Muroidea</taxon>
        <taxon>Muridae</taxon>
        <taxon>Murinae</taxon>
        <taxon>Rattus</taxon>
    </lineage>
</organism>
<protein>
    <recommendedName>
        <fullName evidence="2">M-phase phosphoprotein 8</fullName>
    </recommendedName>
</protein>
<dbReference type="EMBL" id="CH474049">
    <property type="protein sequence ID" value="EDM14330.1"/>
    <property type="molecule type" value="Genomic_DNA"/>
</dbReference>
<dbReference type="EMBL" id="BC099116">
    <property type="protein sequence ID" value="AAH99116.1"/>
    <property type="status" value="ALT_INIT"/>
    <property type="molecule type" value="mRNA"/>
</dbReference>
<dbReference type="RefSeq" id="NP_001017375.2">
    <property type="nucleotide sequence ID" value="NM_001017375.2"/>
</dbReference>
<dbReference type="SMR" id="G3V8T1"/>
<dbReference type="FunCoup" id="G3V8T1">
    <property type="interactions" value="2656"/>
</dbReference>
<dbReference type="STRING" id="10116.ENSRNOP00000028145"/>
<dbReference type="iPTMnet" id="G3V8T1"/>
<dbReference type="PhosphoSitePlus" id="G3V8T1"/>
<dbReference type="PaxDb" id="10116-ENSRNOP00000028145"/>
<dbReference type="Ensembl" id="ENSRNOT00000028145.8">
    <property type="protein sequence ID" value="ENSRNOP00000028145.4"/>
    <property type="gene ID" value="ENSRNOG00000061152.2"/>
</dbReference>
<dbReference type="GeneID" id="290270"/>
<dbReference type="KEGG" id="rno:290270"/>
<dbReference type="AGR" id="RGD:1305133"/>
<dbReference type="CTD" id="54737"/>
<dbReference type="RGD" id="1305133">
    <property type="gene designation" value="Mphosph8"/>
</dbReference>
<dbReference type="eggNOG" id="KOG0504">
    <property type="taxonomic scope" value="Eukaryota"/>
</dbReference>
<dbReference type="eggNOG" id="KOG1911">
    <property type="taxonomic scope" value="Eukaryota"/>
</dbReference>
<dbReference type="GeneTree" id="ENSGT00940000160555"/>
<dbReference type="HOGENOM" id="CLU_332588_0_0_1"/>
<dbReference type="InParanoid" id="G3V8T1"/>
<dbReference type="OrthoDB" id="83147at9989"/>
<dbReference type="Reactome" id="R-RNO-9843970">
    <property type="pathway name" value="Regulation of endogenous retroelements by the Human Silencing Hub (HUSH) complex"/>
</dbReference>
<dbReference type="PRO" id="PR:G3V8T1"/>
<dbReference type="Proteomes" id="UP000002494">
    <property type="component" value="Chromosome 15"/>
</dbReference>
<dbReference type="Proteomes" id="UP000234681">
    <property type="component" value="Chromosome 15"/>
</dbReference>
<dbReference type="Bgee" id="ENSRNOG00000051238">
    <property type="expression patterns" value="Expressed in ovary and 20 other cell types or tissues"/>
</dbReference>
<dbReference type="GO" id="GO:0005737">
    <property type="term" value="C:cytoplasm"/>
    <property type="evidence" value="ECO:0000266"/>
    <property type="project" value="RGD"/>
</dbReference>
<dbReference type="GO" id="GO:0000792">
    <property type="term" value="C:heterochromatin"/>
    <property type="evidence" value="ECO:0000250"/>
    <property type="project" value="UniProtKB"/>
</dbReference>
<dbReference type="GO" id="GO:0000786">
    <property type="term" value="C:nucleosome"/>
    <property type="evidence" value="ECO:0000250"/>
    <property type="project" value="UniProtKB"/>
</dbReference>
<dbReference type="GO" id="GO:0005634">
    <property type="term" value="C:nucleus"/>
    <property type="evidence" value="ECO:0000266"/>
    <property type="project" value="RGD"/>
</dbReference>
<dbReference type="GO" id="GO:0003682">
    <property type="term" value="F:chromatin binding"/>
    <property type="evidence" value="ECO:0000266"/>
    <property type="project" value="RGD"/>
</dbReference>
<dbReference type="GO" id="GO:0062072">
    <property type="term" value="F:histone H3K9me2/3 reader activity"/>
    <property type="evidence" value="ECO:0000250"/>
    <property type="project" value="UniProtKB"/>
</dbReference>
<dbReference type="GO" id="GO:0140566">
    <property type="term" value="F:histone reader activity"/>
    <property type="evidence" value="ECO:0000266"/>
    <property type="project" value="RGD"/>
</dbReference>
<dbReference type="GO" id="GO:0035064">
    <property type="term" value="F:methylated histone binding"/>
    <property type="evidence" value="ECO:0000266"/>
    <property type="project" value="RGD"/>
</dbReference>
<dbReference type="GO" id="GO:0140719">
    <property type="term" value="P:constitutive heterochromatin formation"/>
    <property type="evidence" value="ECO:0000250"/>
    <property type="project" value="UniProtKB"/>
</dbReference>
<dbReference type="GO" id="GO:0044027">
    <property type="term" value="P:negative regulation of gene expression via chromosomal CpG island methylation"/>
    <property type="evidence" value="ECO:0000250"/>
    <property type="project" value="UniProtKB"/>
</dbReference>
<dbReference type="GO" id="GO:0045814">
    <property type="term" value="P:negative regulation of gene expression, epigenetic"/>
    <property type="evidence" value="ECO:0000266"/>
    <property type="project" value="RGD"/>
</dbReference>
<dbReference type="GO" id="GO:0141005">
    <property type="term" value="P:transposable element silencing by heterochromatin formation"/>
    <property type="evidence" value="ECO:0000250"/>
    <property type="project" value="UniProtKB"/>
</dbReference>
<dbReference type="CDD" id="cd18633">
    <property type="entry name" value="CD_MMP8"/>
    <property type="match status" value="1"/>
</dbReference>
<dbReference type="FunFam" id="2.40.50.40:FF:000022">
    <property type="entry name" value="M-phase phosphoprotein 8"/>
    <property type="match status" value="1"/>
</dbReference>
<dbReference type="FunFam" id="1.25.40.20:FF:000132">
    <property type="entry name" value="M-phase phosphoprotein 8 isoform X1"/>
    <property type="match status" value="1"/>
</dbReference>
<dbReference type="Gene3D" id="2.40.50.40">
    <property type="match status" value="1"/>
</dbReference>
<dbReference type="Gene3D" id="1.25.40.20">
    <property type="entry name" value="Ankyrin repeat-containing domain"/>
    <property type="match status" value="1"/>
</dbReference>
<dbReference type="InterPro" id="IPR002110">
    <property type="entry name" value="Ankyrin_rpt"/>
</dbReference>
<dbReference type="InterPro" id="IPR036770">
    <property type="entry name" value="Ankyrin_rpt-contain_sf"/>
</dbReference>
<dbReference type="InterPro" id="IPR016197">
    <property type="entry name" value="Chromo-like_dom_sf"/>
</dbReference>
<dbReference type="InterPro" id="IPR000953">
    <property type="entry name" value="Chromo/chromo_shadow_dom"/>
</dbReference>
<dbReference type="InterPro" id="IPR023780">
    <property type="entry name" value="Chromo_domain"/>
</dbReference>
<dbReference type="InterPro" id="IPR023779">
    <property type="entry name" value="Chromodomain_CS"/>
</dbReference>
<dbReference type="InterPro" id="IPR050889">
    <property type="entry name" value="Dendritic_Spine_Reg/Scaffold"/>
</dbReference>
<dbReference type="PANTHER" id="PTHR24166:SF47">
    <property type="entry name" value="M-PHASE PHOSPHOPROTEIN 8"/>
    <property type="match status" value="1"/>
</dbReference>
<dbReference type="PANTHER" id="PTHR24166">
    <property type="entry name" value="ROLLING PEBBLES, ISOFORM B"/>
    <property type="match status" value="1"/>
</dbReference>
<dbReference type="Pfam" id="PF00023">
    <property type="entry name" value="Ank"/>
    <property type="match status" value="1"/>
</dbReference>
<dbReference type="Pfam" id="PF12796">
    <property type="entry name" value="Ank_2"/>
    <property type="match status" value="1"/>
</dbReference>
<dbReference type="Pfam" id="PF00385">
    <property type="entry name" value="Chromo"/>
    <property type="match status" value="1"/>
</dbReference>
<dbReference type="SMART" id="SM00248">
    <property type="entry name" value="ANK"/>
    <property type="match status" value="3"/>
</dbReference>
<dbReference type="SMART" id="SM00298">
    <property type="entry name" value="CHROMO"/>
    <property type="match status" value="1"/>
</dbReference>
<dbReference type="SUPFAM" id="SSF48403">
    <property type="entry name" value="Ankyrin repeat"/>
    <property type="match status" value="1"/>
</dbReference>
<dbReference type="SUPFAM" id="SSF54160">
    <property type="entry name" value="Chromo domain-like"/>
    <property type="match status" value="1"/>
</dbReference>
<dbReference type="PROSITE" id="PS50297">
    <property type="entry name" value="ANK_REP_REGION"/>
    <property type="match status" value="1"/>
</dbReference>
<dbReference type="PROSITE" id="PS50088">
    <property type="entry name" value="ANK_REPEAT"/>
    <property type="match status" value="3"/>
</dbReference>
<dbReference type="PROSITE" id="PS00598">
    <property type="entry name" value="CHROMO_1"/>
    <property type="match status" value="1"/>
</dbReference>
<dbReference type="PROSITE" id="PS50013">
    <property type="entry name" value="CHROMO_2"/>
    <property type="match status" value="1"/>
</dbReference>
<proteinExistence type="evidence at transcript level"/>